<name>LPXH_ECOLI</name>
<evidence type="ECO:0000255" key="1">
    <source>
        <dbReference type="HAMAP-Rule" id="MF_00575"/>
    </source>
</evidence>
<evidence type="ECO:0000269" key="2">
    <source>
    </source>
</evidence>
<evidence type="ECO:0000269" key="3">
    <source>
    </source>
</evidence>
<evidence type="ECO:0000269" key="4">
    <source>
    </source>
</evidence>
<evidence type="ECO:0000303" key="5">
    <source>
    </source>
</evidence>
<evidence type="ECO:0000303" key="6">
    <source>
    </source>
</evidence>
<evidence type="ECO:0000305" key="7">
    <source>
    </source>
</evidence>
<evidence type="ECO:0000305" key="8">
    <source>
    </source>
</evidence>
<evidence type="ECO:0007829" key="9">
    <source>
        <dbReference type="PDB" id="5WLY"/>
    </source>
</evidence>
<dbReference type="EC" id="3.6.1.54" evidence="1 2 3"/>
<dbReference type="EMBL" id="AF311865">
    <property type="protein sequence ID" value="AAG47820.1"/>
    <property type="molecule type" value="Genomic_DNA"/>
</dbReference>
<dbReference type="EMBL" id="U82664">
    <property type="protein sequence ID" value="AAB40277.1"/>
    <property type="molecule type" value="Genomic_DNA"/>
</dbReference>
<dbReference type="EMBL" id="U00096">
    <property type="protein sequence ID" value="AAC73626.1"/>
    <property type="molecule type" value="Genomic_DNA"/>
</dbReference>
<dbReference type="EMBL" id="AP009048">
    <property type="protein sequence ID" value="BAE76301.1"/>
    <property type="molecule type" value="Genomic_DNA"/>
</dbReference>
<dbReference type="EMBL" id="M19657">
    <property type="status" value="NOT_ANNOTATED_CDS"/>
    <property type="molecule type" value="Genomic_DNA"/>
</dbReference>
<dbReference type="PIR" id="C64784">
    <property type="entry name" value="C64784"/>
</dbReference>
<dbReference type="RefSeq" id="NP_415057.1">
    <property type="nucleotide sequence ID" value="NC_000913.3"/>
</dbReference>
<dbReference type="RefSeq" id="WP_000212247.1">
    <property type="nucleotide sequence ID" value="NZ_SSZK01000024.1"/>
</dbReference>
<dbReference type="PDB" id="5WLY">
    <property type="method" value="X-ray"/>
    <property type="resolution" value="2.00 A"/>
    <property type="chains" value="A=1-240"/>
</dbReference>
<dbReference type="PDBsum" id="5WLY"/>
<dbReference type="SMR" id="P43341"/>
<dbReference type="BioGRID" id="4262817">
    <property type="interactions" value="235"/>
</dbReference>
<dbReference type="DIP" id="DIP-10125N"/>
<dbReference type="FunCoup" id="P43341">
    <property type="interactions" value="239"/>
</dbReference>
<dbReference type="IntAct" id="P43341">
    <property type="interactions" value="20"/>
</dbReference>
<dbReference type="STRING" id="511145.b0524"/>
<dbReference type="PaxDb" id="511145-b0524"/>
<dbReference type="EnsemblBacteria" id="AAC73626">
    <property type="protein sequence ID" value="AAC73626"/>
    <property type="gene ID" value="b0524"/>
</dbReference>
<dbReference type="GeneID" id="949053"/>
<dbReference type="KEGG" id="ecj:JW0513"/>
<dbReference type="KEGG" id="eco:b0524"/>
<dbReference type="KEGG" id="ecoc:C3026_02570"/>
<dbReference type="PATRIC" id="fig|1411691.4.peg.1754"/>
<dbReference type="EchoBASE" id="EB2532"/>
<dbReference type="eggNOG" id="COG2908">
    <property type="taxonomic scope" value="Bacteria"/>
</dbReference>
<dbReference type="HOGENOM" id="CLU_074586_0_0_6"/>
<dbReference type="InParanoid" id="P43341"/>
<dbReference type="OMA" id="GHRHLPM"/>
<dbReference type="OrthoDB" id="9783283at2"/>
<dbReference type="PhylomeDB" id="P43341"/>
<dbReference type="BioCyc" id="EcoCyc:EG12666-MONOMER"/>
<dbReference type="BioCyc" id="MetaCyc:EG12666-MONOMER"/>
<dbReference type="BRENDA" id="3.6.1.54">
    <property type="organism ID" value="2026"/>
</dbReference>
<dbReference type="UniPathway" id="UPA00359">
    <property type="reaction ID" value="UER00480"/>
</dbReference>
<dbReference type="PRO" id="PR:P43341"/>
<dbReference type="Proteomes" id="UP000000625">
    <property type="component" value="Chromosome"/>
</dbReference>
<dbReference type="GO" id="GO:0005737">
    <property type="term" value="C:cytoplasm"/>
    <property type="evidence" value="ECO:0007669"/>
    <property type="project" value="UniProtKB-SubCell"/>
</dbReference>
<dbReference type="GO" id="GO:0019897">
    <property type="term" value="C:extrinsic component of plasma membrane"/>
    <property type="evidence" value="ECO:0007669"/>
    <property type="project" value="UniProtKB-UniRule"/>
</dbReference>
<dbReference type="GO" id="GO:0030145">
    <property type="term" value="F:manganese ion binding"/>
    <property type="evidence" value="ECO:0000314"/>
    <property type="project" value="EcoCyc"/>
</dbReference>
<dbReference type="GO" id="GO:0008758">
    <property type="term" value="F:UDP-2,3-diacylglucosamine hydrolase activity"/>
    <property type="evidence" value="ECO:0000314"/>
    <property type="project" value="UniProtKB"/>
</dbReference>
<dbReference type="GO" id="GO:0009245">
    <property type="term" value="P:lipid A biosynthetic process"/>
    <property type="evidence" value="ECO:0000314"/>
    <property type="project" value="UniProtKB"/>
</dbReference>
<dbReference type="CDD" id="cd07398">
    <property type="entry name" value="MPP_YbbF-LpxH"/>
    <property type="match status" value="1"/>
</dbReference>
<dbReference type="FunFam" id="3.60.21.10:FF:000012">
    <property type="entry name" value="UDP-2,3-diacylglucosamine hydrolase"/>
    <property type="match status" value="1"/>
</dbReference>
<dbReference type="Gene3D" id="3.60.21.10">
    <property type="match status" value="1"/>
</dbReference>
<dbReference type="HAMAP" id="MF_00575">
    <property type="entry name" value="LpxH"/>
    <property type="match status" value="1"/>
</dbReference>
<dbReference type="InterPro" id="IPR004843">
    <property type="entry name" value="Calcineurin-like_PHP_ApaH"/>
</dbReference>
<dbReference type="InterPro" id="IPR043461">
    <property type="entry name" value="LpxH-like"/>
</dbReference>
<dbReference type="InterPro" id="IPR029052">
    <property type="entry name" value="Metallo-depent_PP-like"/>
</dbReference>
<dbReference type="InterPro" id="IPR010138">
    <property type="entry name" value="UDP-diacylglucosamine_Hdrlase"/>
</dbReference>
<dbReference type="NCBIfam" id="TIGR01854">
    <property type="entry name" value="lipid_A_lpxH"/>
    <property type="match status" value="1"/>
</dbReference>
<dbReference type="NCBIfam" id="NF003743">
    <property type="entry name" value="PRK05340.1"/>
    <property type="match status" value="1"/>
</dbReference>
<dbReference type="PANTHER" id="PTHR34990:SF1">
    <property type="entry name" value="UDP-2,3-DIACYLGLUCOSAMINE HYDROLASE"/>
    <property type="match status" value="1"/>
</dbReference>
<dbReference type="PANTHER" id="PTHR34990">
    <property type="entry name" value="UDP-2,3-DIACYLGLUCOSAMINE HYDROLASE-RELATED"/>
    <property type="match status" value="1"/>
</dbReference>
<dbReference type="Pfam" id="PF00149">
    <property type="entry name" value="Metallophos"/>
    <property type="match status" value="1"/>
</dbReference>
<dbReference type="SUPFAM" id="SSF56300">
    <property type="entry name" value="Metallo-dependent phosphatases"/>
    <property type="match status" value="1"/>
</dbReference>
<protein>
    <recommendedName>
        <fullName evidence="1 5">UDP-2,3-diacylglucosamine hydrolase</fullName>
        <ecNumber evidence="1 2 3">3.6.1.54</ecNumber>
    </recommendedName>
    <alternativeName>
        <fullName evidence="1">UDP-2,3-diacylglucosamine diphosphatase</fullName>
    </alternativeName>
    <alternativeName>
        <fullName evidence="6">UDP-2,3-diacylglucosamine pyrophosphatase</fullName>
    </alternativeName>
</protein>
<gene>
    <name evidence="1 5" type="primary">lpxH</name>
    <name type="synonym">ybbF</name>
    <name type="ordered locus">b0524</name>
    <name type="ordered locus">JW0513</name>
</gene>
<accession>P43341</accession>
<accession>P77440</accession>
<accession>Q2MBQ5</accession>
<comment type="function">
    <text evidence="2 3">Hydrolyzes the pyrophosphate bond of UDP-2,3-diacylglucosamine to yield 2,3-diacylglucosamine 1-phosphate (lipid X) and UMP by catalyzing the attack of water at the alpha-P atom (PubMed:12000770). Involved in the biosynthesis of lipid A, a phosphorylated glycolipid that anchors the lipopolysaccharide to the outer membrane of the cell (PubMed:12000770, PubMed:12000771). Is essential for E.coli growth (PubMed:12000771). Does not cleave the unacylated UDP-GlcNAc, the mono-acylated UDP-3-O-(R)-3-hydroxymyristoyl-GlcNAc, and CDP-diacylglycerol (PubMed:12000770).</text>
</comment>
<comment type="catalytic activity">
    <reaction evidence="1 2 3">
        <text>UDP-2-N,3-O-bis[(3R)-3-hydroxytetradecanoyl]-alpha-D-glucosamine + H2O = 2-N,3-O-bis[(3R)-3-hydroxytetradecanoyl]-alpha-D-glucosaminyl 1-phosphate + UMP + 2 H(+)</text>
        <dbReference type="Rhea" id="RHEA:25213"/>
        <dbReference type="ChEBI" id="CHEBI:15377"/>
        <dbReference type="ChEBI" id="CHEBI:15378"/>
        <dbReference type="ChEBI" id="CHEBI:57865"/>
        <dbReference type="ChEBI" id="CHEBI:57957"/>
        <dbReference type="ChEBI" id="CHEBI:78847"/>
        <dbReference type="EC" id="3.6.1.54"/>
    </reaction>
</comment>
<comment type="cofactor">
    <cofactor evidence="1 7">
        <name>Mn(2+)</name>
        <dbReference type="ChEBI" id="CHEBI:29035"/>
    </cofactor>
    <text evidence="1">Binds 2 Mn(2+) ions per subunit in a binuclear metal center.</text>
</comment>
<comment type="activity regulation">
    <text evidence="2 4">Inhibited by a sulfonyl piperazine compound that shows antibacterial activity against E.coli; LpxH is the cellular target of this compound (PubMed:25733621). Inhibited by 0.01% (or more) Triton X-100 in vitro (PubMed:12000770).</text>
</comment>
<comment type="biophysicochemical properties">
    <kinetics>
        <KM evidence="2">61.7 uM for UDP-2-N,3-O-bis((3R)-3-hydroxytetradecanoyl)-alpha-D-glucosamine</KM>
        <Vmax evidence="2">17.2 umol/min/mg enzyme</Vmax>
        <text evidence="7">Assays with partially purified enzyme.</text>
    </kinetics>
    <phDependence>
        <text evidence="2">Optimum pH is 8.0.</text>
    </phDependence>
</comment>
<comment type="pathway">
    <text evidence="1 7 8">Glycolipid biosynthesis; lipid IV(A) biosynthesis; lipid IV(A) from (3R)-3-hydroxytetradecanoyl-[acyl-carrier-protein] and UDP-N-acetyl-alpha-D-glucosamine: step 4/6.</text>
</comment>
<comment type="subcellular location">
    <subcellularLocation>
        <location evidence="7">Cell inner membrane</location>
        <topology evidence="2">Peripheral membrane protein</topology>
        <orientation evidence="7">Cytoplasmic side</orientation>
    </subcellularLocation>
    <subcellularLocation>
        <location evidence="2">Cytoplasm</location>
    </subcellularLocation>
</comment>
<comment type="disruption phenotype">
    <text evidence="3">An insertion mutation defective in lpxH is not viable and accumulates UDP-2,3-diacylglucosamine.</text>
</comment>
<comment type="similarity">
    <text evidence="1">Belongs to the LpxH family.</text>
</comment>
<feature type="chain" id="PRO_0000214108" description="UDP-2,3-diacylglucosamine hydrolase">
    <location>
        <begin position="1"/>
        <end position="240"/>
    </location>
</feature>
<feature type="binding site" evidence="1">
    <location>
        <position position="8"/>
    </location>
    <ligand>
        <name>Mn(2+)</name>
        <dbReference type="ChEBI" id="CHEBI:29035"/>
        <label>1</label>
    </ligand>
</feature>
<feature type="binding site" evidence="1">
    <location>
        <position position="10"/>
    </location>
    <ligand>
        <name>Mn(2+)</name>
        <dbReference type="ChEBI" id="CHEBI:29035"/>
        <label>1</label>
    </ligand>
</feature>
<feature type="binding site" evidence="1">
    <location>
        <position position="41"/>
    </location>
    <ligand>
        <name>Mn(2+)</name>
        <dbReference type="ChEBI" id="CHEBI:29035"/>
        <label>1</label>
    </ligand>
</feature>
<feature type="binding site" evidence="1">
    <location>
        <position position="41"/>
    </location>
    <ligand>
        <name>Mn(2+)</name>
        <dbReference type="ChEBI" id="CHEBI:29035"/>
        <label>2</label>
    </ligand>
</feature>
<feature type="binding site" evidence="1">
    <location>
        <begin position="79"/>
        <end position="80"/>
    </location>
    <ligand>
        <name>substrate</name>
    </ligand>
</feature>
<feature type="binding site" evidence="1">
    <location>
        <position position="79"/>
    </location>
    <ligand>
        <name>Mn(2+)</name>
        <dbReference type="ChEBI" id="CHEBI:29035"/>
        <label>2</label>
    </ligand>
</feature>
<feature type="binding site" evidence="1">
    <location>
        <position position="114"/>
    </location>
    <ligand>
        <name>Mn(2+)</name>
        <dbReference type="ChEBI" id="CHEBI:29035"/>
        <label>2</label>
    </ligand>
</feature>
<feature type="binding site" evidence="1">
    <location>
        <position position="122"/>
    </location>
    <ligand>
        <name>substrate</name>
    </ligand>
</feature>
<feature type="binding site" evidence="1">
    <location>
        <position position="160"/>
    </location>
    <ligand>
        <name>substrate</name>
    </ligand>
</feature>
<feature type="binding site" evidence="1">
    <location>
        <position position="164"/>
    </location>
    <ligand>
        <name>substrate</name>
    </ligand>
</feature>
<feature type="binding site" evidence="1">
    <location>
        <position position="167"/>
    </location>
    <ligand>
        <name>substrate</name>
    </ligand>
</feature>
<feature type="binding site" evidence="1">
    <location>
        <position position="195"/>
    </location>
    <ligand>
        <name>Mn(2+)</name>
        <dbReference type="ChEBI" id="CHEBI:29035"/>
        <label>2</label>
    </ligand>
</feature>
<feature type="binding site" evidence="1">
    <location>
        <position position="195"/>
    </location>
    <ligand>
        <name>substrate</name>
    </ligand>
</feature>
<feature type="binding site" evidence="1">
    <location>
        <position position="197"/>
    </location>
    <ligand>
        <name>Mn(2+)</name>
        <dbReference type="ChEBI" id="CHEBI:29035"/>
        <label>1</label>
    </ligand>
</feature>
<feature type="strand" evidence="9">
    <location>
        <begin position="3"/>
        <end position="6"/>
    </location>
</feature>
<feature type="helix" evidence="9">
    <location>
        <begin position="16"/>
        <end position="27"/>
    </location>
</feature>
<feature type="helix" evidence="9">
    <location>
        <begin position="29"/>
        <end position="32"/>
    </location>
</feature>
<feature type="strand" evidence="9">
    <location>
        <begin position="33"/>
        <end position="38"/>
    </location>
</feature>
<feature type="strand" evidence="9">
    <location>
        <begin position="42"/>
        <end position="44"/>
    </location>
</feature>
<feature type="helix" evidence="9">
    <location>
        <begin position="54"/>
        <end position="68"/>
    </location>
</feature>
<feature type="strand" evidence="9">
    <location>
        <begin position="73"/>
        <end position="75"/>
    </location>
</feature>
<feature type="strand" evidence="9">
    <location>
        <begin position="79"/>
        <end position="81"/>
    </location>
</feature>
<feature type="helix" evidence="9">
    <location>
        <begin position="86"/>
        <end position="92"/>
    </location>
</feature>
<feature type="strand" evidence="9">
    <location>
        <begin position="94"/>
        <end position="96"/>
    </location>
</feature>
<feature type="strand" evidence="9">
    <location>
        <begin position="99"/>
        <end position="105"/>
    </location>
</feature>
<feature type="strand" evidence="9">
    <location>
        <begin position="108"/>
        <end position="112"/>
    </location>
</feature>
<feature type="helix" evidence="9">
    <location>
        <begin position="116"/>
        <end position="118"/>
    </location>
</feature>
<feature type="helix" evidence="9">
    <location>
        <begin position="135"/>
        <end position="141"/>
    </location>
</feature>
<feature type="helix" evidence="9">
    <location>
        <begin position="146"/>
        <end position="160"/>
    </location>
</feature>
<feature type="helix" evidence="9">
    <location>
        <begin position="176"/>
        <end position="185"/>
    </location>
</feature>
<feature type="strand" evidence="9">
    <location>
        <begin position="189"/>
        <end position="193"/>
    </location>
</feature>
<feature type="strand" evidence="9">
    <location>
        <begin position="200"/>
        <end position="206"/>
    </location>
</feature>
<feature type="strand" evidence="9">
    <location>
        <begin position="209"/>
        <end position="215"/>
    </location>
</feature>
<feature type="strand" evidence="9">
    <location>
        <begin position="219"/>
        <end position="228"/>
    </location>
</feature>
<feature type="strand" evidence="9">
    <location>
        <begin position="233"/>
        <end position="238"/>
    </location>
</feature>
<organism>
    <name type="scientific">Escherichia coli (strain K12)</name>
    <dbReference type="NCBI Taxonomy" id="83333"/>
    <lineage>
        <taxon>Bacteria</taxon>
        <taxon>Pseudomonadati</taxon>
        <taxon>Pseudomonadota</taxon>
        <taxon>Gammaproteobacteria</taxon>
        <taxon>Enterobacterales</taxon>
        <taxon>Enterobacteriaceae</taxon>
        <taxon>Escherichia</taxon>
    </lineage>
</organism>
<proteinExistence type="evidence at protein level"/>
<reference key="1">
    <citation type="journal article" date="2002" name="J. Biol. Chem.">
        <title>The Escherichia coli gene encoding the UDP-2,3-diacylglucosamine pyrophosphatase of lipid A biosynthesis.</title>
        <authorList>
            <person name="Babinski K.J."/>
            <person name="Ribeiro A.A."/>
            <person name="Raetz C.R.H."/>
        </authorList>
    </citation>
    <scope>NUCLEOTIDE SEQUENCE [GENOMIC DNA]</scope>
    <scope>FUNCTION</scope>
    <scope>CATALYTIC ACTIVITY</scope>
    <scope>COFACTOR</scope>
    <scope>BIOPHYSICOCHEMICAL PROPERTIES</scope>
    <scope>SUBSTRATE SPECIFICITY</scope>
    <scope>ACTIVITY REGULATION</scope>
    <scope>PATHWAY</scope>
    <scope>SUBCELLULAR LOCATION</scope>
</reference>
<reference key="2">
    <citation type="submission" date="1997-01" db="EMBL/GenBank/DDBJ databases">
        <title>Sequence of minutes 4-25 of Escherichia coli.</title>
        <authorList>
            <person name="Chung E."/>
            <person name="Allen E."/>
            <person name="Araujo R."/>
            <person name="Aparicio A.M."/>
            <person name="Davis K."/>
            <person name="Duncan M."/>
            <person name="Federspiel N."/>
            <person name="Hyman R."/>
            <person name="Kalman S."/>
            <person name="Komp C."/>
            <person name="Kurdi O."/>
            <person name="Lew H."/>
            <person name="Lin D."/>
            <person name="Namath A."/>
            <person name="Oefner P."/>
            <person name="Roberts D."/>
            <person name="Schramm S."/>
            <person name="Davis R.W."/>
        </authorList>
    </citation>
    <scope>NUCLEOTIDE SEQUENCE [LARGE SCALE GENOMIC DNA]</scope>
    <source>
        <strain>K12 / MG1655 / ATCC 47076</strain>
    </source>
</reference>
<reference key="3">
    <citation type="journal article" date="1997" name="Science">
        <title>The complete genome sequence of Escherichia coli K-12.</title>
        <authorList>
            <person name="Blattner F.R."/>
            <person name="Plunkett G. III"/>
            <person name="Bloch C.A."/>
            <person name="Perna N.T."/>
            <person name="Burland V."/>
            <person name="Riley M."/>
            <person name="Collado-Vides J."/>
            <person name="Glasner J.D."/>
            <person name="Rode C.K."/>
            <person name="Mayhew G.F."/>
            <person name="Gregor J."/>
            <person name="Davis N.W."/>
            <person name="Kirkpatrick H.A."/>
            <person name="Goeden M.A."/>
            <person name="Rose D.J."/>
            <person name="Mau B."/>
            <person name="Shao Y."/>
        </authorList>
    </citation>
    <scope>NUCLEOTIDE SEQUENCE [LARGE SCALE GENOMIC DNA]</scope>
    <source>
        <strain>K12 / MG1655 / ATCC 47076</strain>
    </source>
</reference>
<reference key="4">
    <citation type="journal article" date="2006" name="Mol. Syst. Biol.">
        <title>Highly accurate genome sequences of Escherichia coli K-12 strains MG1655 and W3110.</title>
        <authorList>
            <person name="Hayashi K."/>
            <person name="Morooka N."/>
            <person name="Yamamoto Y."/>
            <person name="Fujita K."/>
            <person name="Isono K."/>
            <person name="Choi S."/>
            <person name="Ohtsubo E."/>
            <person name="Baba T."/>
            <person name="Wanner B.L."/>
            <person name="Mori H."/>
            <person name="Horiuchi T."/>
        </authorList>
    </citation>
    <scope>NUCLEOTIDE SEQUENCE [LARGE SCALE GENOMIC DNA]</scope>
    <source>
        <strain>K12 / W3110 / ATCC 27325 / DSM 5911</strain>
    </source>
</reference>
<reference key="5">
    <citation type="journal article" date="1989" name="J. Bacteriol.">
        <title>Identification and sequence analysis of Escherichia coli purE and purK genes encoding 5'-phosphoribosyl-5-amino-4-imidazole carboxylase for de novo purine biosynthesis.</title>
        <authorList>
            <person name="Watanabe W."/>
            <person name="Sampei G."/>
            <person name="Aiba A."/>
            <person name="Mizobuchi K."/>
        </authorList>
    </citation>
    <scope>NUCLEOTIDE SEQUENCE [GENOMIC DNA] OF 151-240</scope>
</reference>
<reference key="6">
    <citation type="journal article" date="1995" name="Nucleic Acids Res.">
        <title>Detection of new genes in a bacterial genome using Markov models for three gene classes.</title>
        <authorList>
            <person name="Borodovsky M."/>
            <person name="McIninch J."/>
            <person name="Koonin E.V."/>
            <person name="Rudd K.E."/>
            <person name="Medigue C."/>
            <person name="Danchin A."/>
        </authorList>
    </citation>
    <scope>IDENTIFICATION</scope>
</reference>
<reference key="7">
    <citation type="journal article" date="2002" name="J. Biol. Chem.">
        <title>Accumulation of the lipid A precursor UDP-2,3-diacylglucosamine in an Escherichia coli mutant lacking the lpxH gene.</title>
        <authorList>
            <person name="Babinski K.J."/>
            <person name="Kanjilal S.J."/>
            <person name="Raetz C.R.H."/>
        </authorList>
    </citation>
    <scope>FUNCTION</scope>
    <scope>CATALYTIC ACTIVITY</scope>
    <scope>DISRUPTION PHENOTYPE</scope>
    <scope>PATHWAY</scope>
</reference>
<reference key="8">
    <citation type="journal article" date="2015" name="J. Bacteriol.">
        <title>Novel antibacterial targets and compounds revealed by a high-throughput cell wall reporter assay.</title>
        <authorList>
            <person name="Nayar A.S."/>
            <person name="Dougherty T.J."/>
            <person name="Ferguson K.E."/>
            <person name="Granger B.A."/>
            <person name="McWilliams L."/>
            <person name="Stacey C."/>
            <person name="Leach L.J."/>
            <person name="Narita S."/>
            <person name="Tokuda H."/>
            <person name="Miller A.A."/>
            <person name="Brown D.G."/>
            <person name="McLeod S.M."/>
        </authorList>
    </citation>
    <scope>ACTIVITY REGULATION</scope>
</reference>
<sequence>MATLFIADLHLCVEEPAITAGFLRFLAGEARKADALYILGDLFEAWIGDDDPNPLHRKMAAAIKAVSDSGVPCYFIHGNRDFLLGKRFARESGMTLLPEEKVLELYGRRVLIMHGDTLCTDDAGYQAFRAKVHKPWLQTLFLALPLFVRKRIAARMRANSKEANSSKSLAIMDVNQNAVVSAMEKHQVQWLIHGHTHRPAVHELIANQQPAFRVVLGAWHTEGSMVKVTADDVELIHFPF</sequence>
<keyword id="KW-0002">3D-structure</keyword>
<keyword id="KW-0997">Cell inner membrane</keyword>
<keyword id="KW-1003">Cell membrane</keyword>
<keyword id="KW-0963">Cytoplasm</keyword>
<keyword id="KW-0378">Hydrolase</keyword>
<keyword id="KW-0441">Lipid A biosynthesis</keyword>
<keyword id="KW-0444">Lipid biosynthesis</keyword>
<keyword id="KW-0443">Lipid metabolism</keyword>
<keyword id="KW-0464">Manganese</keyword>
<keyword id="KW-0472">Membrane</keyword>
<keyword id="KW-0479">Metal-binding</keyword>
<keyword id="KW-1185">Reference proteome</keyword>